<comment type="catalytic activity">
    <reaction evidence="1">
        <text>(S)-4-amino-5-oxopentanoate = 5-aminolevulinate</text>
        <dbReference type="Rhea" id="RHEA:14265"/>
        <dbReference type="ChEBI" id="CHEBI:57501"/>
        <dbReference type="ChEBI" id="CHEBI:356416"/>
        <dbReference type="EC" id="5.4.3.8"/>
    </reaction>
</comment>
<comment type="cofactor">
    <cofactor evidence="1">
        <name>pyridoxal 5'-phosphate</name>
        <dbReference type="ChEBI" id="CHEBI:597326"/>
    </cofactor>
</comment>
<comment type="pathway">
    <text evidence="1">Porphyrin-containing compound metabolism; protoporphyrin-IX biosynthesis; 5-aminolevulinate from L-glutamyl-tRNA(Glu): step 2/2.</text>
</comment>
<comment type="subunit">
    <text evidence="1">Homodimer.</text>
</comment>
<comment type="subcellular location">
    <subcellularLocation>
        <location evidence="1">Cytoplasm</location>
    </subcellularLocation>
</comment>
<comment type="similarity">
    <text evidence="1">Belongs to the class-III pyridoxal-phosphate-dependent aminotransferase family. HemL subfamily.</text>
</comment>
<organism>
    <name type="scientific">Desulforamulus reducens (strain ATCC BAA-1160 / DSM 100696 / MI-1)</name>
    <name type="common">Desulfotomaculum reducens</name>
    <dbReference type="NCBI Taxonomy" id="349161"/>
    <lineage>
        <taxon>Bacteria</taxon>
        <taxon>Bacillati</taxon>
        <taxon>Bacillota</taxon>
        <taxon>Clostridia</taxon>
        <taxon>Eubacteriales</taxon>
        <taxon>Peptococcaceae</taxon>
        <taxon>Desulforamulus</taxon>
    </lineage>
</organism>
<dbReference type="EC" id="5.4.3.8" evidence="1"/>
<dbReference type="EMBL" id="CP000612">
    <property type="protein sequence ID" value="ABO50673.1"/>
    <property type="molecule type" value="Genomic_DNA"/>
</dbReference>
<dbReference type="RefSeq" id="WP_011878475.1">
    <property type="nucleotide sequence ID" value="NC_009253.1"/>
</dbReference>
<dbReference type="SMR" id="A4J6H0"/>
<dbReference type="STRING" id="349161.Dred_2156"/>
<dbReference type="KEGG" id="drm:Dred_2156"/>
<dbReference type="eggNOG" id="COG0001">
    <property type="taxonomic scope" value="Bacteria"/>
</dbReference>
<dbReference type="HOGENOM" id="CLU_016922_1_5_9"/>
<dbReference type="OrthoDB" id="9807885at2"/>
<dbReference type="UniPathway" id="UPA00251">
    <property type="reaction ID" value="UER00317"/>
</dbReference>
<dbReference type="Proteomes" id="UP000001556">
    <property type="component" value="Chromosome"/>
</dbReference>
<dbReference type="GO" id="GO:0005737">
    <property type="term" value="C:cytoplasm"/>
    <property type="evidence" value="ECO:0007669"/>
    <property type="project" value="UniProtKB-SubCell"/>
</dbReference>
<dbReference type="GO" id="GO:0042286">
    <property type="term" value="F:glutamate-1-semialdehyde 2,1-aminomutase activity"/>
    <property type="evidence" value="ECO:0007669"/>
    <property type="project" value="UniProtKB-UniRule"/>
</dbReference>
<dbReference type="GO" id="GO:0030170">
    <property type="term" value="F:pyridoxal phosphate binding"/>
    <property type="evidence" value="ECO:0007669"/>
    <property type="project" value="InterPro"/>
</dbReference>
<dbReference type="GO" id="GO:0008483">
    <property type="term" value="F:transaminase activity"/>
    <property type="evidence" value="ECO:0007669"/>
    <property type="project" value="InterPro"/>
</dbReference>
<dbReference type="GO" id="GO:0006782">
    <property type="term" value="P:protoporphyrinogen IX biosynthetic process"/>
    <property type="evidence" value="ECO:0007669"/>
    <property type="project" value="UniProtKB-UniRule"/>
</dbReference>
<dbReference type="CDD" id="cd00610">
    <property type="entry name" value="OAT_like"/>
    <property type="match status" value="1"/>
</dbReference>
<dbReference type="FunFam" id="3.40.640.10:FF:000021">
    <property type="entry name" value="Glutamate-1-semialdehyde 2,1-aminomutase"/>
    <property type="match status" value="1"/>
</dbReference>
<dbReference type="Gene3D" id="3.90.1150.10">
    <property type="entry name" value="Aspartate Aminotransferase, domain 1"/>
    <property type="match status" value="1"/>
</dbReference>
<dbReference type="Gene3D" id="3.40.640.10">
    <property type="entry name" value="Type I PLP-dependent aspartate aminotransferase-like (Major domain)"/>
    <property type="match status" value="1"/>
</dbReference>
<dbReference type="HAMAP" id="MF_00375">
    <property type="entry name" value="HemL_aminotrans_3"/>
    <property type="match status" value="1"/>
</dbReference>
<dbReference type="InterPro" id="IPR004639">
    <property type="entry name" value="4pyrrol_synth_GluAld_NH2Trfase"/>
</dbReference>
<dbReference type="InterPro" id="IPR005814">
    <property type="entry name" value="Aminotrans_3"/>
</dbReference>
<dbReference type="InterPro" id="IPR049704">
    <property type="entry name" value="Aminotrans_3_PPA_site"/>
</dbReference>
<dbReference type="InterPro" id="IPR015424">
    <property type="entry name" value="PyrdxlP-dep_Trfase"/>
</dbReference>
<dbReference type="InterPro" id="IPR015421">
    <property type="entry name" value="PyrdxlP-dep_Trfase_major"/>
</dbReference>
<dbReference type="InterPro" id="IPR015422">
    <property type="entry name" value="PyrdxlP-dep_Trfase_small"/>
</dbReference>
<dbReference type="NCBIfam" id="TIGR00713">
    <property type="entry name" value="hemL"/>
    <property type="match status" value="1"/>
</dbReference>
<dbReference type="NCBIfam" id="NF000818">
    <property type="entry name" value="PRK00062.1"/>
    <property type="match status" value="1"/>
</dbReference>
<dbReference type="PANTHER" id="PTHR43713">
    <property type="entry name" value="GLUTAMATE-1-SEMIALDEHYDE 2,1-AMINOMUTASE"/>
    <property type="match status" value="1"/>
</dbReference>
<dbReference type="PANTHER" id="PTHR43713:SF3">
    <property type="entry name" value="GLUTAMATE-1-SEMIALDEHYDE 2,1-AMINOMUTASE 1, CHLOROPLASTIC-RELATED"/>
    <property type="match status" value="1"/>
</dbReference>
<dbReference type="Pfam" id="PF00202">
    <property type="entry name" value="Aminotran_3"/>
    <property type="match status" value="1"/>
</dbReference>
<dbReference type="SUPFAM" id="SSF53383">
    <property type="entry name" value="PLP-dependent transferases"/>
    <property type="match status" value="1"/>
</dbReference>
<dbReference type="PROSITE" id="PS00600">
    <property type="entry name" value="AA_TRANSFER_CLASS_3"/>
    <property type="match status" value="1"/>
</dbReference>
<sequence>MAPSYQKSEEMFEQAQRIIPGGVNSPVRAFKSVGMNPPFIARANGSRMWDVDGNEYIDYICSWGPQILGHRHPAVIHALQDCLEKGTTYGAPTDLEVTLAQMLTEALPSVEMVRMVNSGTEATMSALRLARAYTNRSKIIKFEGCYHGHHDSLLIKAGSGALTHGVPTSPGVPENIASNTINARYNDLELLEKIFTEVGSDIAAIIVEPLAGNMGVVPPAEGFLQGLRDLCNKHSALLIFDEVITGFRLSYGGAQAYYNVMPDLTCLGKIIGGGLPVGAYGGRREIMQMVSPAGPVYQAGTLSGNPLAMTAGIATLKQLQQPGVYEELDYKSDLLAQGLIQAAKAAGVEASFNRVQSLQTCFFTQQDVRDFATASSSDTKQYAAFFRNMLEQGIYLAPAQFEATFVSLAHTENDIERTVEAAFNAFRAAAKE</sequence>
<evidence type="ECO:0000255" key="1">
    <source>
        <dbReference type="HAMAP-Rule" id="MF_00375"/>
    </source>
</evidence>
<keyword id="KW-0963">Cytoplasm</keyword>
<keyword id="KW-0413">Isomerase</keyword>
<keyword id="KW-0627">Porphyrin biosynthesis</keyword>
<keyword id="KW-0663">Pyridoxal phosphate</keyword>
<keyword id="KW-1185">Reference proteome</keyword>
<reference key="1">
    <citation type="submission" date="2007-03" db="EMBL/GenBank/DDBJ databases">
        <title>Complete sequence of Desulfotomaculum reducens MI-1.</title>
        <authorList>
            <consortium name="US DOE Joint Genome Institute"/>
            <person name="Copeland A."/>
            <person name="Lucas S."/>
            <person name="Lapidus A."/>
            <person name="Barry K."/>
            <person name="Detter J.C."/>
            <person name="Glavina del Rio T."/>
            <person name="Hammon N."/>
            <person name="Israni S."/>
            <person name="Dalin E."/>
            <person name="Tice H."/>
            <person name="Pitluck S."/>
            <person name="Sims D."/>
            <person name="Brettin T."/>
            <person name="Bruce D."/>
            <person name="Han C."/>
            <person name="Tapia R."/>
            <person name="Schmutz J."/>
            <person name="Larimer F."/>
            <person name="Land M."/>
            <person name="Hauser L."/>
            <person name="Kyrpides N."/>
            <person name="Kim E."/>
            <person name="Tebo B.M."/>
            <person name="Richardson P."/>
        </authorList>
    </citation>
    <scope>NUCLEOTIDE SEQUENCE [LARGE SCALE GENOMIC DNA]</scope>
    <source>
        <strain>ATCC BAA-1160 / DSM 100696 / MI-1</strain>
    </source>
</reference>
<feature type="chain" id="PRO_0000382310" description="Glutamate-1-semialdehyde 2,1-aminomutase">
    <location>
        <begin position="1"/>
        <end position="432"/>
    </location>
</feature>
<feature type="modified residue" description="N6-(pyridoxal phosphate)lysine" evidence="1">
    <location>
        <position position="269"/>
    </location>
</feature>
<gene>
    <name evidence="1" type="primary">hemL</name>
    <name type="ordered locus">Dred_2156</name>
</gene>
<name>GSA_DESRM</name>
<accession>A4J6H0</accession>
<proteinExistence type="inferred from homology"/>
<protein>
    <recommendedName>
        <fullName evidence="1">Glutamate-1-semialdehyde 2,1-aminomutase</fullName>
        <shortName evidence="1">GSA</shortName>
        <ecNumber evidence="1">5.4.3.8</ecNumber>
    </recommendedName>
    <alternativeName>
        <fullName evidence="1">Glutamate-1-semialdehyde aminotransferase</fullName>
        <shortName evidence="1">GSA-AT</shortName>
    </alternativeName>
</protein>